<keyword id="KW-0997">Cell inner membrane</keyword>
<keyword id="KW-1003">Cell membrane</keyword>
<keyword id="KW-0472">Membrane</keyword>
<keyword id="KW-0769">Symport</keyword>
<keyword id="KW-0812">Transmembrane</keyword>
<keyword id="KW-1133">Transmembrane helix</keyword>
<keyword id="KW-0813">Transport</keyword>
<name>DCTA_SHIBS</name>
<sequence length="428" mass="45436">MKTSLFKSLYFQVLTAIAIGILLGHFYPEIGEQMKPLGDGFVKLIKMIIAPVIFCTVVTGIAGMESMKAVGRTGAVALLYFEIVSTIALIIGLIIVNVVQPGAGMNVDPATLDAKAVAVYADQAKDQGIVAFIMDVIPASVIGAFASGNILQVLLFAVLFGFALHRLGSKGQLIFNVIESFSQVIFGIINMIMRLAPIGAFGAMAFTIGKYGVGTLVQLGQLIICFYITCILFVVLVLGSIAKATGFSIFKFIRYIREELLIVLGTSSSESALPRMLDKMEKLGCRKSVVGLVIPTGYSFNLDGTSIYLTMAAVFIAQATNSQMDIVHQITLLIVLLLSSKGAAGVTGSGFIVLAATLSAVGHLPVAGLALILGIDRFMSEARALTNLVGNGVATIVVAKWVKELDHKKLDDVLNNRAPDGKTHELSS</sequence>
<proteinExistence type="inferred from homology"/>
<accession>Q31V97</accession>
<reference key="1">
    <citation type="journal article" date="2005" name="Nucleic Acids Res.">
        <title>Genome dynamics and diversity of Shigella species, the etiologic agents of bacillary dysentery.</title>
        <authorList>
            <person name="Yang F."/>
            <person name="Yang J."/>
            <person name="Zhang X."/>
            <person name="Chen L."/>
            <person name="Jiang Y."/>
            <person name="Yan Y."/>
            <person name="Tang X."/>
            <person name="Wang J."/>
            <person name="Xiong Z."/>
            <person name="Dong J."/>
            <person name="Xue Y."/>
            <person name="Zhu Y."/>
            <person name="Xu X."/>
            <person name="Sun L."/>
            <person name="Chen S."/>
            <person name="Nie H."/>
            <person name="Peng J."/>
            <person name="Xu J."/>
            <person name="Wang Y."/>
            <person name="Yuan Z."/>
            <person name="Wen Y."/>
            <person name="Yao Z."/>
            <person name="Shen Y."/>
            <person name="Qiang B."/>
            <person name="Hou Y."/>
            <person name="Yu J."/>
            <person name="Jin Q."/>
        </authorList>
    </citation>
    <scope>NUCLEOTIDE SEQUENCE [LARGE SCALE GENOMIC DNA]</scope>
    <source>
        <strain>Sb227</strain>
    </source>
</reference>
<protein>
    <recommendedName>
        <fullName evidence="1">C4-dicarboxylate transport protein</fullName>
    </recommendedName>
</protein>
<gene>
    <name evidence="1" type="primary">dctA</name>
    <name type="ordered locus">SBO_3527</name>
</gene>
<comment type="function">
    <text evidence="1">Responsible for the transport of dicarboxylates such as succinate, fumarate, and malate from the periplasm across the membrane.</text>
</comment>
<comment type="subcellular location">
    <subcellularLocation>
        <location evidence="1">Cell inner membrane</location>
        <topology evidence="1">Multi-pass membrane protein</topology>
    </subcellularLocation>
</comment>
<comment type="similarity">
    <text evidence="1">Belongs to the dicarboxylate/amino acid:cation symporter (DAACS) (TC 2.A.23) family.</text>
</comment>
<feature type="chain" id="PRO_1000067465" description="C4-dicarboxylate transport protein">
    <location>
        <begin position="1"/>
        <end position="428"/>
    </location>
</feature>
<feature type="transmembrane region" description="Helical" evidence="1">
    <location>
        <begin position="8"/>
        <end position="28"/>
    </location>
</feature>
<feature type="transmembrane region" description="Helical" evidence="1">
    <location>
        <begin position="44"/>
        <end position="64"/>
    </location>
</feature>
<feature type="transmembrane region" description="Helical" evidence="1">
    <location>
        <begin position="76"/>
        <end position="96"/>
    </location>
</feature>
<feature type="transmembrane region" description="Helical" evidence="1">
    <location>
        <begin position="142"/>
        <end position="162"/>
    </location>
</feature>
<feature type="transmembrane region" description="Helical" evidence="1">
    <location>
        <begin position="184"/>
        <end position="204"/>
    </location>
</feature>
<feature type="transmembrane region" description="Helical" evidence="1">
    <location>
        <begin position="222"/>
        <end position="242"/>
    </location>
</feature>
<feature type="transmembrane region" description="Helical" evidence="1">
    <location>
        <begin position="326"/>
        <end position="346"/>
    </location>
</feature>
<feature type="transmembrane region" description="Helical" evidence="1">
    <location>
        <begin position="352"/>
        <end position="372"/>
    </location>
</feature>
<dbReference type="EMBL" id="CP000036">
    <property type="protein sequence ID" value="ABB68011.1"/>
    <property type="molecule type" value="Genomic_DNA"/>
</dbReference>
<dbReference type="RefSeq" id="WP_000858214.1">
    <property type="nucleotide sequence ID" value="NC_007613.1"/>
</dbReference>
<dbReference type="SMR" id="Q31V97"/>
<dbReference type="GeneID" id="93778248"/>
<dbReference type="KEGG" id="sbo:SBO_3527"/>
<dbReference type="HOGENOM" id="CLU_019375_7_0_6"/>
<dbReference type="Proteomes" id="UP000007067">
    <property type="component" value="Chromosome"/>
</dbReference>
<dbReference type="GO" id="GO:0005886">
    <property type="term" value="C:plasma membrane"/>
    <property type="evidence" value="ECO:0007669"/>
    <property type="project" value="UniProtKB-SubCell"/>
</dbReference>
<dbReference type="GO" id="GO:0015138">
    <property type="term" value="F:fumarate transmembrane transporter activity"/>
    <property type="evidence" value="ECO:0007669"/>
    <property type="project" value="TreeGrafter"/>
</dbReference>
<dbReference type="GO" id="GO:0015366">
    <property type="term" value="F:malate:proton symporter activity"/>
    <property type="evidence" value="ECO:0007669"/>
    <property type="project" value="TreeGrafter"/>
</dbReference>
<dbReference type="GO" id="GO:0015141">
    <property type="term" value="F:succinate transmembrane transporter activity"/>
    <property type="evidence" value="ECO:0007669"/>
    <property type="project" value="TreeGrafter"/>
</dbReference>
<dbReference type="GO" id="GO:0070778">
    <property type="term" value="P:L-aspartate transmembrane transport"/>
    <property type="evidence" value="ECO:0007669"/>
    <property type="project" value="TreeGrafter"/>
</dbReference>
<dbReference type="FunFam" id="1.10.3860.10:FF:000001">
    <property type="entry name" value="C4-dicarboxylate transport protein"/>
    <property type="match status" value="1"/>
</dbReference>
<dbReference type="Gene3D" id="1.10.3860.10">
    <property type="entry name" value="Sodium:dicarboxylate symporter"/>
    <property type="match status" value="1"/>
</dbReference>
<dbReference type="HAMAP" id="MF_01300">
    <property type="entry name" value="C4_dicarb_transport"/>
    <property type="match status" value="1"/>
</dbReference>
<dbReference type="InterPro" id="IPR023954">
    <property type="entry name" value="C4_dicarb_transport"/>
</dbReference>
<dbReference type="InterPro" id="IPR001991">
    <property type="entry name" value="Na-dicarboxylate_symporter"/>
</dbReference>
<dbReference type="InterPro" id="IPR018107">
    <property type="entry name" value="Na-dicarboxylate_symporter_CS"/>
</dbReference>
<dbReference type="InterPro" id="IPR036458">
    <property type="entry name" value="Na:dicarbo_symporter_sf"/>
</dbReference>
<dbReference type="NCBIfam" id="NF002461">
    <property type="entry name" value="PRK01663.1"/>
    <property type="match status" value="1"/>
</dbReference>
<dbReference type="NCBIfam" id="NF009587">
    <property type="entry name" value="PRK13027.1"/>
    <property type="match status" value="1"/>
</dbReference>
<dbReference type="PANTHER" id="PTHR42865:SF1">
    <property type="entry name" value="AEROBIC C4-DICARBOXYLATE TRANSPORT PROTEIN"/>
    <property type="match status" value="1"/>
</dbReference>
<dbReference type="PANTHER" id="PTHR42865">
    <property type="entry name" value="PROTON/GLUTAMATE-ASPARTATE SYMPORTER"/>
    <property type="match status" value="1"/>
</dbReference>
<dbReference type="Pfam" id="PF00375">
    <property type="entry name" value="SDF"/>
    <property type="match status" value="1"/>
</dbReference>
<dbReference type="PRINTS" id="PR00173">
    <property type="entry name" value="EDTRNSPORT"/>
</dbReference>
<dbReference type="SUPFAM" id="SSF118215">
    <property type="entry name" value="Proton glutamate symport protein"/>
    <property type="match status" value="1"/>
</dbReference>
<dbReference type="PROSITE" id="PS00713">
    <property type="entry name" value="NA_DICARBOXYL_SYMP_1"/>
    <property type="match status" value="1"/>
</dbReference>
<dbReference type="PROSITE" id="PS00714">
    <property type="entry name" value="NA_DICARBOXYL_SYMP_2"/>
    <property type="match status" value="1"/>
</dbReference>
<evidence type="ECO:0000255" key="1">
    <source>
        <dbReference type="HAMAP-Rule" id="MF_01300"/>
    </source>
</evidence>
<organism>
    <name type="scientific">Shigella boydii serotype 4 (strain Sb227)</name>
    <dbReference type="NCBI Taxonomy" id="300268"/>
    <lineage>
        <taxon>Bacteria</taxon>
        <taxon>Pseudomonadati</taxon>
        <taxon>Pseudomonadota</taxon>
        <taxon>Gammaproteobacteria</taxon>
        <taxon>Enterobacterales</taxon>
        <taxon>Enterobacteriaceae</taxon>
        <taxon>Shigella</taxon>
    </lineage>
</organism>